<protein>
    <recommendedName>
        <fullName evidence="1">Aldo-keto reductase BQ2027_MB2996</fullName>
        <ecNumber evidence="1">1.1.1.-</ecNumber>
    </recommendedName>
</protein>
<comment type="induction">
    <text evidence="3">Induced in response to the thiol oxidant diamide.</text>
</comment>
<comment type="similarity">
    <text evidence="4">Belongs to the aldo/keto reductase family.</text>
</comment>
<dbReference type="EC" id="1.1.1.-" evidence="1"/>
<dbReference type="EMBL" id="LT708304">
    <property type="protein sequence ID" value="SIU01619.1"/>
    <property type="molecule type" value="Genomic_DNA"/>
</dbReference>
<dbReference type="RefSeq" id="NP_856641.1">
    <property type="nucleotide sequence ID" value="NC_002945.3"/>
</dbReference>
<dbReference type="RefSeq" id="WP_003415022.1">
    <property type="nucleotide sequence ID" value="NC_002945.4"/>
</dbReference>
<dbReference type="SMR" id="Q7TXI6"/>
<dbReference type="KEGG" id="mbo:BQ2027_MB2996"/>
<dbReference type="PATRIC" id="fig|233413.5.peg.3293"/>
<dbReference type="Proteomes" id="UP000001419">
    <property type="component" value="Chromosome"/>
</dbReference>
<dbReference type="GO" id="GO:0004033">
    <property type="term" value="F:aldo-keto reductase (NADPH) activity"/>
    <property type="evidence" value="ECO:0007669"/>
    <property type="project" value="TreeGrafter"/>
</dbReference>
<dbReference type="CDD" id="cd19134">
    <property type="entry name" value="AKR_AKR5H1"/>
    <property type="match status" value="1"/>
</dbReference>
<dbReference type="FunFam" id="3.20.20.100:FF:000002">
    <property type="entry name" value="2,5-diketo-D-gluconic acid reductase A"/>
    <property type="match status" value="1"/>
</dbReference>
<dbReference type="Gene3D" id="3.20.20.100">
    <property type="entry name" value="NADP-dependent oxidoreductase domain"/>
    <property type="match status" value="1"/>
</dbReference>
<dbReference type="InterPro" id="IPR020471">
    <property type="entry name" value="AKR"/>
</dbReference>
<dbReference type="InterPro" id="IPR018170">
    <property type="entry name" value="Aldo/ket_reductase_CS"/>
</dbReference>
<dbReference type="InterPro" id="IPR023210">
    <property type="entry name" value="NADP_OxRdtase_dom"/>
</dbReference>
<dbReference type="InterPro" id="IPR036812">
    <property type="entry name" value="NADP_OxRdtase_dom_sf"/>
</dbReference>
<dbReference type="PANTHER" id="PTHR43827">
    <property type="entry name" value="2,5-DIKETO-D-GLUCONIC ACID REDUCTASE"/>
    <property type="match status" value="1"/>
</dbReference>
<dbReference type="PANTHER" id="PTHR43827:SF3">
    <property type="entry name" value="NADP-DEPENDENT OXIDOREDUCTASE DOMAIN-CONTAINING PROTEIN"/>
    <property type="match status" value="1"/>
</dbReference>
<dbReference type="Pfam" id="PF00248">
    <property type="entry name" value="Aldo_ket_red"/>
    <property type="match status" value="1"/>
</dbReference>
<dbReference type="PIRSF" id="PIRSF000097">
    <property type="entry name" value="AKR"/>
    <property type="match status" value="1"/>
</dbReference>
<dbReference type="PRINTS" id="PR00069">
    <property type="entry name" value="ALDKETRDTASE"/>
</dbReference>
<dbReference type="SUPFAM" id="SSF51430">
    <property type="entry name" value="NAD(P)-linked oxidoreductase"/>
    <property type="match status" value="1"/>
</dbReference>
<dbReference type="PROSITE" id="PS00062">
    <property type="entry name" value="ALDOKETO_REDUCTASE_2"/>
    <property type="match status" value="1"/>
</dbReference>
<reference key="1">
    <citation type="journal article" date="2003" name="Proc. Natl. Acad. Sci. U.S.A.">
        <title>The complete genome sequence of Mycobacterium bovis.</title>
        <authorList>
            <person name="Garnier T."/>
            <person name="Eiglmeier K."/>
            <person name="Camus J.-C."/>
            <person name="Medina N."/>
            <person name="Mansoor H."/>
            <person name="Pryor M."/>
            <person name="Duthoy S."/>
            <person name="Grondin S."/>
            <person name="Lacroix C."/>
            <person name="Monsempe C."/>
            <person name="Simon S."/>
            <person name="Harris B."/>
            <person name="Atkin R."/>
            <person name="Doggett J."/>
            <person name="Mayes R."/>
            <person name="Keating L."/>
            <person name="Wheeler P.R."/>
            <person name="Parkhill J."/>
            <person name="Barrell B.G."/>
            <person name="Cole S.T."/>
            <person name="Gordon S.V."/>
            <person name="Hewinson R.G."/>
        </authorList>
    </citation>
    <scope>NUCLEOTIDE SEQUENCE [LARGE SCALE GENOMIC DNA]</scope>
    <source>
        <strain>ATCC BAA-935 / AF2122/97</strain>
    </source>
</reference>
<reference key="2">
    <citation type="journal article" date="2017" name="Genome Announc.">
        <title>Updated reference genome sequence and annotation of Mycobacterium bovis AF2122/97.</title>
        <authorList>
            <person name="Malone K.M."/>
            <person name="Farrell D."/>
            <person name="Stuber T.P."/>
            <person name="Schubert O.T."/>
            <person name="Aebersold R."/>
            <person name="Robbe-Austerman S."/>
            <person name="Gordon S.V."/>
        </authorList>
    </citation>
    <scope>NUCLEOTIDE SEQUENCE [LARGE SCALE GENOMIC DNA]</scope>
    <scope>GENOME REANNOTATION</scope>
    <source>
        <strain>ATCC BAA-935 / AF2122/97</strain>
    </source>
</reference>
<reference key="3">
    <citation type="journal article" date="2005" name="FEMS Microbiol. Lett.">
        <title>Thiol specific oxidative stress response in Mycobacteria.</title>
        <authorList>
            <person name="Dosanjh N.S."/>
            <person name="Rawat M."/>
            <person name="Chung J.-H."/>
            <person name="Av-Gay Y."/>
        </authorList>
    </citation>
    <scope>IDENTIFICATION BY MASS SPECTROMETRY</scope>
    <scope>INDUCTION</scope>
    <source>
        <strain>BCG / Pasteur</strain>
    </source>
</reference>
<sequence length="282" mass="30387">MTGESGAAAAPSITLNDEHTMPVLGLGVAELSDDETERAVSAALEIGCRLIDTAYAYGNEAAVGRAIAASGVAREELFVTTKLATPDQGFTRSQEACRASLDRLGLDYVDLYLIHWPAPPVGKYVDAWGGMIQSRGEGHARSIGVSNFTAEHIENLIDLTFVTPAVNQIELHPLLNQDELRKANAQHTVVTQSYCPLALGRLLDNPTVTSIASEYVKTPAQVLLRWNLQLGNAVVVRSARPERIASNFDVFDFELAAEHMDALGGLNDGTRVREDPLTYAGT</sequence>
<organism>
    <name type="scientific">Mycobacterium bovis (strain ATCC BAA-935 / AF2122/97)</name>
    <dbReference type="NCBI Taxonomy" id="233413"/>
    <lineage>
        <taxon>Bacteria</taxon>
        <taxon>Bacillati</taxon>
        <taxon>Actinomycetota</taxon>
        <taxon>Actinomycetes</taxon>
        <taxon>Mycobacteriales</taxon>
        <taxon>Mycobacteriaceae</taxon>
        <taxon>Mycobacterium</taxon>
        <taxon>Mycobacterium tuberculosis complex</taxon>
    </lineage>
</organism>
<name>Y2996_MYCBO</name>
<feature type="chain" id="PRO_0000380732" description="Aldo-keto reductase BQ2027_MB2996">
    <location>
        <begin position="1"/>
        <end position="282"/>
    </location>
</feature>
<feature type="active site" description="Proton donor" evidence="2">
    <location>
        <position position="57"/>
    </location>
</feature>
<feature type="binding site" evidence="1">
    <location>
        <position position="197"/>
    </location>
    <ligand>
        <name>NADPH</name>
        <dbReference type="ChEBI" id="CHEBI:57783"/>
    </ligand>
</feature>
<feature type="binding site" evidence="1">
    <location>
        <position position="235"/>
    </location>
    <ligand>
        <name>NADPH</name>
        <dbReference type="ChEBI" id="CHEBI:57783"/>
    </ligand>
</feature>
<feature type="binding site" evidence="1">
    <location>
        <position position="237"/>
    </location>
    <ligand>
        <name>NADPH</name>
        <dbReference type="ChEBI" id="CHEBI:57783"/>
    </ligand>
</feature>
<feature type="binding site" evidence="1">
    <location>
        <position position="238"/>
    </location>
    <ligand>
        <name>NADPH</name>
        <dbReference type="ChEBI" id="CHEBI:57783"/>
    </ligand>
</feature>
<feature type="binding site" evidence="1">
    <location>
        <position position="239"/>
    </location>
    <ligand>
        <name>NADPH</name>
        <dbReference type="ChEBI" id="CHEBI:57783"/>
    </ligand>
</feature>
<feature type="binding site" evidence="1">
    <location>
        <position position="243"/>
    </location>
    <ligand>
        <name>NADPH</name>
        <dbReference type="ChEBI" id="CHEBI:57783"/>
    </ligand>
</feature>
<feature type="binding site" evidence="1">
    <location>
        <position position="246"/>
    </location>
    <ligand>
        <name>NADPH</name>
        <dbReference type="ChEBI" id="CHEBI:57783"/>
    </ligand>
</feature>
<feature type="binding site" evidence="1">
    <location>
        <position position="247"/>
    </location>
    <ligand>
        <name>NADPH</name>
        <dbReference type="ChEBI" id="CHEBI:57783"/>
    </ligand>
</feature>
<feature type="binding site" evidence="1">
    <location>
        <position position="273"/>
    </location>
    <ligand>
        <name>NADPH</name>
        <dbReference type="ChEBI" id="CHEBI:57783"/>
    </ligand>
</feature>
<keyword id="KW-0521">NADP</keyword>
<keyword id="KW-0560">Oxidoreductase</keyword>
<keyword id="KW-1185">Reference proteome</keyword>
<evidence type="ECO:0000250" key="1">
    <source>
        <dbReference type="UniProtKB" id="A0QV09"/>
    </source>
</evidence>
<evidence type="ECO:0000250" key="2">
    <source>
        <dbReference type="UniProtKB" id="P80874"/>
    </source>
</evidence>
<evidence type="ECO:0000269" key="3">
    <source>
    </source>
</evidence>
<evidence type="ECO:0000305" key="4"/>
<proteinExistence type="evidence at protein level"/>
<accession>Q7TXI6</accession>
<accession>A0A1R3Y2Q3</accession>
<accession>X2BMD1</accession>
<gene>
    <name type="ordered locus">BQ2027_MB2996</name>
</gene>